<dbReference type="EMBL" id="AY466375">
    <property type="protein sequence ID" value="AAR85891.1"/>
    <property type="molecule type" value="mRNA"/>
</dbReference>
<dbReference type="EMBL" id="AK012833">
    <property type="protein sequence ID" value="BAB28501.1"/>
    <property type="molecule type" value="mRNA"/>
</dbReference>
<dbReference type="EMBL" id="BC049071">
    <property type="protein sequence ID" value="AAH49071.1"/>
    <property type="molecule type" value="mRNA"/>
</dbReference>
<dbReference type="EMBL" id="BC055714">
    <property type="protein sequence ID" value="AAH55714.1"/>
    <property type="molecule type" value="mRNA"/>
</dbReference>
<dbReference type="CCDS" id="CCDS30058.1"/>
<dbReference type="RefSeq" id="NP_001345405.1">
    <property type="nucleotide sequence ID" value="NM_001358476.1"/>
</dbReference>
<dbReference type="RefSeq" id="NP_001345406.1">
    <property type="nucleotide sequence ID" value="NM_001358477.1"/>
</dbReference>
<dbReference type="RefSeq" id="NP_001345407.1">
    <property type="nucleotide sequence ID" value="NM_001358478.1"/>
</dbReference>
<dbReference type="RefSeq" id="NP_001345408.1">
    <property type="nucleotide sequence ID" value="NM_001358479.1"/>
</dbReference>
<dbReference type="RefSeq" id="NP_001345409.1">
    <property type="nucleotide sequence ID" value="NM_001358480.1"/>
</dbReference>
<dbReference type="RefSeq" id="NP_082601.1">
    <property type="nucleotide sequence ID" value="NM_028325.4"/>
</dbReference>
<dbReference type="RefSeq" id="XP_006541458.1">
    <property type="nucleotide sequence ID" value="XM_006541395.1"/>
</dbReference>
<dbReference type="RefSeq" id="XP_006541460.1">
    <property type="nucleotide sequence ID" value="XM_006541397.1"/>
</dbReference>
<dbReference type="RefSeq" id="XP_006541461.1">
    <property type="nucleotide sequence ID" value="XM_006541398.1"/>
</dbReference>
<dbReference type="RefSeq" id="XP_006541462.1">
    <property type="nucleotide sequence ID" value="XM_006541399.3"/>
</dbReference>
<dbReference type="RefSeq" id="XP_006541463.1">
    <property type="nucleotide sequence ID" value="XM_006541400.2"/>
</dbReference>
<dbReference type="RefSeq" id="XP_006541464.1">
    <property type="nucleotide sequence ID" value="XM_006541401.1"/>
</dbReference>
<dbReference type="RefSeq" id="XP_006541466.1">
    <property type="nucleotide sequence ID" value="XM_006541403.1"/>
</dbReference>
<dbReference type="RefSeq" id="XP_011249276.1">
    <property type="nucleotide sequence ID" value="XM_011250974.4"/>
</dbReference>
<dbReference type="RefSeq" id="XP_017174118.1">
    <property type="nucleotide sequence ID" value="XM_017318629.1"/>
</dbReference>
<dbReference type="RefSeq" id="XP_017174119.1">
    <property type="nucleotide sequence ID" value="XM_017318630.3"/>
</dbReference>
<dbReference type="RefSeq" id="XP_036017996.1">
    <property type="nucleotide sequence ID" value="XM_036162103.1"/>
</dbReference>
<dbReference type="RefSeq" id="XP_036017997.1">
    <property type="nucleotide sequence ID" value="XM_036162104.1"/>
</dbReference>
<dbReference type="RefSeq" id="XP_036017998.1">
    <property type="nucleotide sequence ID" value="XM_036162105.1"/>
</dbReference>
<dbReference type="SMR" id="Q9CZA5"/>
<dbReference type="BioGRID" id="215519">
    <property type="interactions" value="1"/>
</dbReference>
<dbReference type="FunCoup" id="Q9CZA5">
    <property type="interactions" value="445"/>
</dbReference>
<dbReference type="STRING" id="10090.ENSMUSP00000110911"/>
<dbReference type="PhosphoSitePlus" id="Q9CZA5"/>
<dbReference type="jPOST" id="Q9CZA5"/>
<dbReference type="PaxDb" id="10090-ENSMUSP00000110913"/>
<dbReference type="ProteomicsDB" id="275131"/>
<dbReference type="DNASU" id="72693"/>
<dbReference type="Ensembl" id="ENSMUST00000048067.10">
    <property type="protein sequence ID" value="ENSMUSP00000044550.4"/>
    <property type="gene ID" value="ENSMUSG00000036699.13"/>
</dbReference>
<dbReference type="Ensembl" id="ENSMUST00000115256.2">
    <property type="protein sequence ID" value="ENSMUSP00000110911.2"/>
    <property type="gene ID" value="ENSMUSG00000036699.13"/>
</dbReference>
<dbReference type="Ensembl" id="ENSMUST00000115257.8">
    <property type="protein sequence ID" value="ENSMUSP00000110912.2"/>
    <property type="gene ID" value="ENSMUSG00000036699.13"/>
</dbReference>
<dbReference type="Ensembl" id="ENSMUST00000115258.9">
    <property type="protein sequence ID" value="ENSMUSP00000110913.3"/>
    <property type="gene ID" value="ENSMUSG00000036699.13"/>
</dbReference>
<dbReference type="GeneID" id="72693"/>
<dbReference type="KEGG" id="mmu:72693"/>
<dbReference type="UCSC" id="uc009sxk.2">
    <property type="organism name" value="mouse"/>
</dbReference>
<dbReference type="AGR" id="MGI:1919943"/>
<dbReference type="CTD" id="170261"/>
<dbReference type="MGI" id="MGI:1919943">
    <property type="gene designation" value="Zcchc12"/>
</dbReference>
<dbReference type="VEuPathDB" id="HostDB:ENSMUSG00000036699"/>
<dbReference type="eggNOG" id="ENOG502RU0T">
    <property type="taxonomic scope" value="Eukaryota"/>
</dbReference>
<dbReference type="GeneTree" id="ENSGT01030000234522"/>
<dbReference type="HOGENOM" id="CLU_686127_0_0_1"/>
<dbReference type="InParanoid" id="Q9CZA5"/>
<dbReference type="OMA" id="RKHTIRC"/>
<dbReference type="OrthoDB" id="115435at2759"/>
<dbReference type="PhylomeDB" id="Q9CZA5"/>
<dbReference type="TreeFam" id="TF335054"/>
<dbReference type="BioGRID-ORCS" id="72693">
    <property type="hits" value="1 hit in 79 CRISPR screens"/>
</dbReference>
<dbReference type="ChiTaRS" id="Zcchc12">
    <property type="organism name" value="mouse"/>
</dbReference>
<dbReference type="PRO" id="PR:Q9CZA5"/>
<dbReference type="Proteomes" id="UP000000589">
    <property type="component" value="Chromosome X"/>
</dbReference>
<dbReference type="RNAct" id="Q9CZA5">
    <property type="molecule type" value="protein"/>
</dbReference>
<dbReference type="Bgee" id="ENSMUSG00000036699">
    <property type="expression patterns" value="Expressed in medial preoptic region and 164 other cell types or tissues"/>
</dbReference>
<dbReference type="GO" id="GO:0016607">
    <property type="term" value="C:nuclear speck"/>
    <property type="evidence" value="ECO:0000314"/>
    <property type="project" value="MGI"/>
</dbReference>
<dbReference type="GO" id="GO:0005634">
    <property type="term" value="C:nucleus"/>
    <property type="evidence" value="ECO:0000314"/>
    <property type="project" value="MGI"/>
</dbReference>
<dbReference type="GO" id="GO:0016605">
    <property type="term" value="C:PML body"/>
    <property type="evidence" value="ECO:0000314"/>
    <property type="project" value="MGI"/>
</dbReference>
<dbReference type="GO" id="GO:0003676">
    <property type="term" value="F:nucleic acid binding"/>
    <property type="evidence" value="ECO:0007669"/>
    <property type="project" value="InterPro"/>
</dbReference>
<dbReference type="GO" id="GO:0032183">
    <property type="term" value="F:SUMO binding"/>
    <property type="evidence" value="ECO:0000314"/>
    <property type="project" value="MGI"/>
</dbReference>
<dbReference type="GO" id="GO:0003713">
    <property type="term" value="F:transcription coactivator activity"/>
    <property type="evidence" value="ECO:0000314"/>
    <property type="project" value="MGI"/>
</dbReference>
<dbReference type="GO" id="GO:0008270">
    <property type="term" value="F:zinc ion binding"/>
    <property type="evidence" value="ECO:0007669"/>
    <property type="project" value="UniProtKB-KW"/>
</dbReference>
<dbReference type="GO" id="GO:0030509">
    <property type="term" value="P:BMP signaling pathway"/>
    <property type="evidence" value="ECO:0000314"/>
    <property type="project" value="MGI"/>
</dbReference>
<dbReference type="GO" id="GO:0045944">
    <property type="term" value="P:positive regulation of transcription by RNA polymerase II"/>
    <property type="evidence" value="ECO:0000314"/>
    <property type="project" value="MGI"/>
</dbReference>
<dbReference type="InterPro" id="IPR026523">
    <property type="entry name" value="PNMA"/>
</dbReference>
<dbReference type="InterPro" id="IPR048270">
    <property type="entry name" value="PNMA_C"/>
</dbReference>
<dbReference type="InterPro" id="IPR001878">
    <property type="entry name" value="Znf_CCHC"/>
</dbReference>
<dbReference type="PANTHER" id="PTHR23095">
    <property type="entry name" value="PARANEOPLASTIC ANTIGEN"/>
    <property type="match status" value="1"/>
</dbReference>
<dbReference type="PANTHER" id="PTHR23095:SF18">
    <property type="entry name" value="ZINC FINGER CCHC DOMAIN-CONTAINING PROTEIN 12"/>
    <property type="match status" value="1"/>
</dbReference>
<dbReference type="Pfam" id="PF14893">
    <property type="entry name" value="PNMA"/>
    <property type="match status" value="1"/>
</dbReference>
<dbReference type="PROSITE" id="PS50158">
    <property type="entry name" value="ZF_CCHC"/>
    <property type="match status" value="1"/>
</dbReference>
<proteinExistence type="evidence at protein level"/>
<reference key="1">
    <citation type="journal article" date="2008" name="Mol. Cell. Biol.">
        <title>Sizn1 is a novel protein that functions as a transcriptional coactivator of bone morphogenic protein signaling.</title>
        <authorList>
            <person name="Cho G."/>
            <person name="Lim Y."/>
            <person name="Zand D."/>
            <person name="Golden J.A."/>
        </authorList>
    </citation>
    <scope>NUCLEOTIDE SEQUENCE [MRNA]</scope>
    <scope>FUNCTION</scope>
    <scope>INTERACTION WITH SMAD1 AND CBP</scope>
    <scope>TISSUE SPECIFICITY</scope>
</reference>
<reference key="2">
    <citation type="journal article" date="2005" name="Science">
        <title>The transcriptional landscape of the mammalian genome.</title>
        <authorList>
            <person name="Carninci P."/>
            <person name="Kasukawa T."/>
            <person name="Katayama S."/>
            <person name="Gough J."/>
            <person name="Frith M.C."/>
            <person name="Maeda N."/>
            <person name="Oyama R."/>
            <person name="Ravasi T."/>
            <person name="Lenhard B."/>
            <person name="Wells C."/>
            <person name="Kodzius R."/>
            <person name="Shimokawa K."/>
            <person name="Bajic V.B."/>
            <person name="Brenner S.E."/>
            <person name="Batalov S."/>
            <person name="Forrest A.R."/>
            <person name="Zavolan M."/>
            <person name="Davis M.J."/>
            <person name="Wilming L.G."/>
            <person name="Aidinis V."/>
            <person name="Allen J.E."/>
            <person name="Ambesi-Impiombato A."/>
            <person name="Apweiler R."/>
            <person name="Aturaliya R.N."/>
            <person name="Bailey T.L."/>
            <person name="Bansal M."/>
            <person name="Baxter L."/>
            <person name="Beisel K.W."/>
            <person name="Bersano T."/>
            <person name="Bono H."/>
            <person name="Chalk A.M."/>
            <person name="Chiu K.P."/>
            <person name="Choudhary V."/>
            <person name="Christoffels A."/>
            <person name="Clutterbuck D.R."/>
            <person name="Crowe M.L."/>
            <person name="Dalla E."/>
            <person name="Dalrymple B.P."/>
            <person name="de Bono B."/>
            <person name="Della Gatta G."/>
            <person name="di Bernardo D."/>
            <person name="Down T."/>
            <person name="Engstrom P."/>
            <person name="Fagiolini M."/>
            <person name="Faulkner G."/>
            <person name="Fletcher C.F."/>
            <person name="Fukushima T."/>
            <person name="Furuno M."/>
            <person name="Futaki S."/>
            <person name="Gariboldi M."/>
            <person name="Georgii-Hemming P."/>
            <person name="Gingeras T.R."/>
            <person name="Gojobori T."/>
            <person name="Green R.E."/>
            <person name="Gustincich S."/>
            <person name="Harbers M."/>
            <person name="Hayashi Y."/>
            <person name="Hensch T.K."/>
            <person name="Hirokawa N."/>
            <person name="Hill D."/>
            <person name="Huminiecki L."/>
            <person name="Iacono M."/>
            <person name="Ikeo K."/>
            <person name="Iwama A."/>
            <person name="Ishikawa T."/>
            <person name="Jakt M."/>
            <person name="Kanapin A."/>
            <person name="Katoh M."/>
            <person name="Kawasawa Y."/>
            <person name="Kelso J."/>
            <person name="Kitamura H."/>
            <person name="Kitano H."/>
            <person name="Kollias G."/>
            <person name="Krishnan S.P."/>
            <person name="Kruger A."/>
            <person name="Kummerfeld S.K."/>
            <person name="Kurochkin I.V."/>
            <person name="Lareau L.F."/>
            <person name="Lazarevic D."/>
            <person name="Lipovich L."/>
            <person name="Liu J."/>
            <person name="Liuni S."/>
            <person name="McWilliam S."/>
            <person name="Madan Babu M."/>
            <person name="Madera M."/>
            <person name="Marchionni L."/>
            <person name="Matsuda H."/>
            <person name="Matsuzawa S."/>
            <person name="Miki H."/>
            <person name="Mignone F."/>
            <person name="Miyake S."/>
            <person name="Morris K."/>
            <person name="Mottagui-Tabar S."/>
            <person name="Mulder N."/>
            <person name="Nakano N."/>
            <person name="Nakauchi H."/>
            <person name="Ng P."/>
            <person name="Nilsson R."/>
            <person name="Nishiguchi S."/>
            <person name="Nishikawa S."/>
            <person name="Nori F."/>
            <person name="Ohara O."/>
            <person name="Okazaki Y."/>
            <person name="Orlando V."/>
            <person name="Pang K.C."/>
            <person name="Pavan W.J."/>
            <person name="Pavesi G."/>
            <person name="Pesole G."/>
            <person name="Petrovsky N."/>
            <person name="Piazza S."/>
            <person name="Reed J."/>
            <person name="Reid J.F."/>
            <person name="Ring B.Z."/>
            <person name="Ringwald M."/>
            <person name="Rost B."/>
            <person name="Ruan Y."/>
            <person name="Salzberg S.L."/>
            <person name="Sandelin A."/>
            <person name="Schneider C."/>
            <person name="Schoenbach C."/>
            <person name="Sekiguchi K."/>
            <person name="Semple C.A."/>
            <person name="Seno S."/>
            <person name="Sessa L."/>
            <person name="Sheng Y."/>
            <person name="Shibata Y."/>
            <person name="Shimada H."/>
            <person name="Shimada K."/>
            <person name="Silva D."/>
            <person name="Sinclair B."/>
            <person name="Sperling S."/>
            <person name="Stupka E."/>
            <person name="Sugiura K."/>
            <person name="Sultana R."/>
            <person name="Takenaka Y."/>
            <person name="Taki K."/>
            <person name="Tammoja K."/>
            <person name="Tan S.L."/>
            <person name="Tang S."/>
            <person name="Taylor M.S."/>
            <person name="Tegner J."/>
            <person name="Teichmann S.A."/>
            <person name="Ueda H.R."/>
            <person name="van Nimwegen E."/>
            <person name="Verardo R."/>
            <person name="Wei C.L."/>
            <person name="Yagi K."/>
            <person name="Yamanishi H."/>
            <person name="Zabarovsky E."/>
            <person name="Zhu S."/>
            <person name="Zimmer A."/>
            <person name="Hide W."/>
            <person name="Bult C."/>
            <person name="Grimmond S.M."/>
            <person name="Teasdale R.D."/>
            <person name="Liu E.T."/>
            <person name="Brusic V."/>
            <person name="Quackenbush J."/>
            <person name="Wahlestedt C."/>
            <person name="Mattick J.S."/>
            <person name="Hume D.A."/>
            <person name="Kai C."/>
            <person name="Sasaki D."/>
            <person name="Tomaru Y."/>
            <person name="Fukuda S."/>
            <person name="Kanamori-Katayama M."/>
            <person name="Suzuki M."/>
            <person name="Aoki J."/>
            <person name="Arakawa T."/>
            <person name="Iida J."/>
            <person name="Imamura K."/>
            <person name="Itoh M."/>
            <person name="Kato T."/>
            <person name="Kawaji H."/>
            <person name="Kawagashira N."/>
            <person name="Kawashima T."/>
            <person name="Kojima M."/>
            <person name="Kondo S."/>
            <person name="Konno H."/>
            <person name="Nakano K."/>
            <person name="Ninomiya N."/>
            <person name="Nishio T."/>
            <person name="Okada M."/>
            <person name="Plessy C."/>
            <person name="Shibata K."/>
            <person name="Shiraki T."/>
            <person name="Suzuki S."/>
            <person name="Tagami M."/>
            <person name="Waki K."/>
            <person name="Watahiki A."/>
            <person name="Okamura-Oho Y."/>
            <person name="Suzuki H."/>
            <person name="Kawai J."/>
            <person name="Hayashizaki Y."/>
        </authorList>
    </citation>
    <scope>NUCLEOTIDE SEQUENCE [LARGE SCALE MRNA]</scope>
    <source>
        <strain>C57BL/6J</strain>
    </source>
</reference>
<reference key="3">
    <citation type="journal article" date="2004" name="Genome Res.">
        <title>The status, quality, and expansion of the NIH full-length cDNA project: the Mammalian Gene Collection (MGC).</title>
        <authorList>
            <consortium name="The MGC Project Team"/>
        </authorList>
    </citation>
    <scope>NUCLEOTIDE SEQUENCE [LARGE SCALE MRNA]</scope>
    <source>
        <strain>C57BL/6J</strain>
        <tissue>Brain</tissue>
    </source>
</reference>
<sequence>MASILSRLGSSRGQNSPLPPWAHSMLRSLGRSLGPLMASMAERNMRLFSGRAEPAQGEETFENWLSQVTGVLPDWHMPEEEKVRRLMRTLRGPAREVMRLLQAANPGLDVEDFLRAMKLVFGESESSVTAHSKFVNTVQEHGEKPSLYVIRLEVQLQNAIQAGVFAEREANQARLHQLLVGAEMSTDLRFRLKNLLRVYANEPERLPNFLELIRMIREEEEWEETFINPKRPRRAESVMERALSPMAFQSSPPIMISSIDCNVIEIDDSPDDSDEDVILVEPEDPPLPSSSASSFLGRAVSEDQVLVIESPNIFEIQAPSTSSGAGRKNNRGFGELRRARKRKHTIHCSHCGEEGHSKETCDNESDKGQVFENLIITLQELTHAEERARGAPGEPIGLSEPQ</sequence>
<keyword id="KW-0479">Metal-binding</keyword>
<keyword id="KW-1185">Reference proteome</keyword>
<keyword id="KW-0804">Transcription</keyword>
<keyword id="KW-0805">Transcription regulation</keyword>
<keyword id="KW-0862">Zinc</keyword>
<keyword id="KW-0863">Zinc-finger</keyword>
<comment type="function">
    <text evidence="3">Transcriptional coactivator in the bone morphogenetic protein (BMP)-signaling pathway. It positively modulates BMP signaling by interacting with SMAD1 and associating with CBP in the transcription complex. It contributes to the BMP-induced enhancement of cholinergic-neuron-specific gene expression.</text>
</comment>
<comment type="subunit">
    <text evidence="3">Interacts with SMAD1 and CREB-binding protein (CBP). Forms a protein-DNA complex through its association with SMAD1.</text>
</comment>
<comment type="tissue specificity">
    <text evidence="3">In embryonic brains expression is restricted to the ventral region of the forebrain, including the septum, amygdala, caudal putamen, and in the basal-forebrain cholinergic neurons. In adults, expressed in the brain, and at low levels in the testis.</text>
</comment>
<comment type="similarity">
    <text evidence="4">Belongs to the ZCCHC12 family.</text>
</comment>
<gene>
    <name type="primary">Zcchc12</name>
    <name type="synonym">Sizn1</name>
</gene>
<feature type="chain" id="PRO_0000150972" description="Zinc finger CCHC domain-containing protein 12">
    <location>
        <begin position="1"/>
        <end position="402"/>
    </location>
</feature>
<feature type="zinc finger region" description="CCHC-type" evidence="1">
    <location>
        <begin position="346"/>
        <end position="363"/>
    </location>
</feature>
<feature type="region of interest" description="Disordered" evidence="2">
    <location>
        <begin position="1"/>
        <end position="20"/>
    </location>
</feature>
<feature type="region of interest" description="Disordered" evidence="2">
    <location>
        <begin position="383"/>
        <end position="402"/>
    </location>
</feature>
<organism>
    <name type="scientific">Mus musculus</name>
    <name type="common">Mouse</name>
    <dbReference type="NCBI Taxonomy" id="10090"/>
    <lineage>
        <taxon>Eukaryota</taxon>
        <taxon>Metazoa</taxon>
        <taxon>Chordata</taxon>
        <taxon>Craniata</taxon>
        <taxon>Vertebrata</taxon>
        <taxon>Euteleostomi</taxon>
        <taxon>Mammalia</taxon>
        <taxon>Eutheria</taxon>
        <taxon>Euarchontoglires</taxon>
        <taxon>Glires</taxon>
        <taxon>Rodentia</taxon>
        <taxon>Myomorpha</taxon>
        <taxon>Muroidea</taxon>
        <taxon>Muridae</taxon>
        <taxon>Murinae</taxon>
        <taxon>Mus</taxon>
        <taxon>Mus</taxon>
    </lineage>
</organism>
<name>ZCH12_MOUSE</name>
<protein>
    <recommendedName>
        <fullName>Zinc finger CCHC domain-containing protein 12</fullName>
    </recommendedName>
    <alternativeName>
        <fullName>Smad-interacting zinc finger protein 1</fullName>
    </alternativeName>
</protein>
<accession>Q9CZA5</accession>
<evidence type="ECO:0000255" key="1">
    <source>
        <dbReference type="PROSITE-ProRule" id="PRU00047"/>
    </source>
</evidence>
<evidence type="ECO:0000256" key="2">
    <source>
        <dbReference type="SAM" id="MobiDB-lite"/>
    </source>
</evidence>
<evidence type="ECO:0000269" key="3">
    <source>
    </source>
</evidence>
<evidence type="ECO:0000305" key="4"/>